<sequence>MRIMGLDVGSKTVGVAISDPLGFTAQGLEIIPIDEEKGEFGLERLTELVEQYKVDKFVVGLPKNMNNTSGPRVEASQAYGDLLTERYKLPVDYQDERLTTVAAERMLIEQADISRGKRKKVIDKLAAQLILQNYLDRTF</sequence>
<feature type="chain" id="PRO_1000061574" description="Putative pre-16S rRNA nuclease">
    <location>
        <begin position="1"/>
        <end position="139"/>
    </location>
</feature>
<organism>
    <name type="scientific">Streptococcus suis (strain 05ZYH33)</name>
    <dbReference type="NCBI Taxonomy" id="391295"/>
    <lineage>
        <taxon>Bacteria</taxon>
        <taxon>Bacillati</taxon>
        <taxon>Bacillota</taxon>
        <taxon>Bacilli</taxon>
        <taxon>Lactobacillales</taxon>
        <taxon>Streptococcaceae</taxon>
        <taxon>Streptococcus</taxon>
    </lineage>
</organism>
<reference key="1">
    <citation type="journal article" date="2007" name="PLoS ONE">
        <title>A glimpse of streptococcal toxic shock syndrome from comparative genomics of S. suis 2 Chinese isolates.</title>
        <authorList>
            <person name="Chen C."/>
            <person name="Tang J."/>
            <person name="Dong W."/>
            <person name="Wang C."/>
            <person name="Feng Y."/>
            <person name="Wang J."/>
            <person name="Zheng F."/>
            <person name="Pan X."/>
            <person name="Liu D."/>
            <person name="Li M."/>
            <person name="Song Y."/>
            <person name="Zhu X."/>
            <person name="Sun H."/>
            <person name="Feng T."/>
            <person name="Guo Z."/>
            <person name="Ju A."/>
            <person name="Ge J."/>
            <person name="Dong Y."/>
            <person name="Sun W."/>
            <person name="Jiang Y."/>
            <person name="Wang J."/>
            <person name="Yan J."/>
            <person name="Yang H."/>
            <person name="Wang X."/>
            <person name="Gao G.F."/>
            <person name="Yang R."/>
            <person name="Wang J."/>
            <person name="Yu J."/>
        </authorList>
    </citation>
    <scope>NUCLEOTIDE SEQUENCE [LARGE SCALE GENOMIC DNA]</scope>
    <source>
        <strain>05ZYH33</strain>
    </source>
</reference>
<gene>
    <name type="ordered locus">SSU05_0067</name>
</gene>
<dbReference type="EC" id="3.1.-.-" evidence="1"/>
<dbReference type="EMBL" id="CP000407">
    <property type="protein sequence ID" value="ABP89039.1"/>
    <property type="molecule type" value="Genomic_DNA"/>
</dbReference>
<dbReference type="SMR" id="A4VSF0"/>
<dbReference type="STRING" id="391295.SSU05_0067"/>
<dbReference type="KEGG" id="ssu:SSU05_0067"/>
<dbReference type="eggNOG" id="COG0816">
    <property type="taxonomic scope" value="Bacteria"/>
</dbReference>
<dbReference type="HOGENOM" id="CLU_098240_2_0_9"/>
<dbReference type="BioCyc" id="SSUI391295:GHI8-85-MONOMER"/>
<dbReference type="GO" id="GO:0005829">
    <property type="term" value="C:cytosol"/>
    <property type="evidence" value="ECO:0007669"/>
    <property type="project" value="TreeGrafter"/>
</dbReference>
<dbReference type="GO" id="GO:0004518">
    <property type="term" value="F:nuclease activity"/>
    <property type="evidence" value="ECO:0007669"/>
    <property type="project" value="UniProtKB-KW"/>
</dbReference>
<dbReference type="GO" id="GO:0000967">
    <property type="term" value="P:rRNA 5'-end processing"/>
    <property type="evidence" value="ECO:0007669"/>
    <property type="project" value="UniProtKB-UniRule"/>
</dbReference>
<dbReference type="CDD" id="cd16964">
    <property type="entry name" value="YqgF"/>
    <property type="match status" value="1"/>
</dbReference>
<dbReference type="FunFam" id="3.30.420.140:FF:000003">
    <property type="entry name" value="Putative pre-16S rRNA nuclease"/>
    <property type="match status" value="1"/>
</dbReference>
<dbReference type="Gene3D" id="3.30.420.140">
    <property type="entry name" value="YqgF/RNase H-like domain"/>
    <property type="match status" value="1"/>
</dbReference>
<dbReference type="HAMAP" id="MF_00651">
    <property type="entry name" value="Nuclease_YqgF"/>
    <property type="match status" value="1"/>
</dbReference>
<dbReference type="InterPro" id="IPR012337">
    <property type="entry name" value="RNaseH-like_sf"/>
</dbReference>
<dbReference type="InterPro" id="IPR005227">
    <property type="entry name" value="YqgF"/>
</dbReference>
<dbReference type="InterPro" id="IPR006641">
    <property type="entry name" value="YqgF/RNaseH-like_dom"/>
</dbReference>
<dbReference type="InterPro" id="IPR037027">
    <property type="entry name" value="YqgF/RNaseH-like_dom_sf"/>
</dbReference>
<dbReference type="NCBIfam" id="TIGR00250">
    <property type="entry name" value="RNAse_H_YqgF"/>
    <property type="match status" value="1"/>
</dbReference>
<dbReference type="PANTHER" id="PTHR33317">
    <property type="entry name" value="POLYNUCLEOTIDYL TRANSFERASE, RIBONUCLEASE H-LIKE SUPERFAMILY PROTEIN"/>
    <property type="match status" value="1"/>
</dbReference>
<dbReference type="PANTHER" id="PTHR33317:SF4">
    <property type="entry name" value="POLYNUCLEOTIDYL TRANSFERASE, RIBONUCLEASE H-LIKE SUPERFAMILY PROTEIN"/>
    <property type="match status" value="1"/>
</dbReference>
<dbReference type="Pfam" id="PF03652">
    <property type="entry name" value="RuvX"/>
    <property type="match status" value="1"/>
</dbReference>
<dbReference type="SMART" id="SM00732">
    <property type="entry name" value="YqgFc"/>
    <property type="match status" value="1"/>
</dbReference>
<dbReference type="SUPFAM" id="SSF53098">
    <property type="entry name" value="Ribonuclease H-like"/>
    <property type="match status" value="1"/>
</dbReference>
<keyword id="KW-0963">Cytoplasm</keyword>
<keyword id="KW-0378">Hydrolase</keyword>
<keyword id="KW-0540">Nuclease</keyword>
<keyword id="KW-0690">Ribosome biogenesis</keyword>
<accession>A4VSF0</accession>
<name>YQGF_STRSY</name>
<protein>
    <recommendedName>
        <fullName evidence="1">Putative pre-16S rRNA nuclease</fullName>
        <ecNumber evidence="1">3.1.-.-</ecNumber>
    </recommendedName>
</protein>
<proteinExistence type="inferred from homology"/>
<comment type="function">
    <text evidence="1">Could be a nuclease involved in processing of the 5'-end of pre-16S rRNA.</text>
</comment>
<comment type="subcellular location">
    <subcellularLocation>
        <location evidence="1">Cytoplasm</location>
    </subcellularLocation>
</comment>
<comment type="similarity">
    <text evidence="1">Belongs to the YqgF nuclease family.</text>
</comment>
<evidence type="ECO:0000255" key="1">
    <source>
        <dbReference type="HAMAP-Rule" id="MF_00651"/>
    </source>
</evidence>